<proteinExistence type="evidence at protein level"/>
<keyword id="KW-0997">Cell inner membrane</keyword>
<keyword id="KW-1003">Cell membrane</keyword>
<keyword id="KW-0460">Magnesium</keyword>
<keyword id="KW-0472">Membrane</keyword>
<keyword id="KW-1185">Reference proteome</keyword>
<keyword id="KW-0808">Transferase</keyword>
<keyword id="KW-0812">Transmembrane</keyword>
<keyword id="KW-1133">Transmembrane helix</keyword>
<keyword id="KW-0831">Ubiquinone biosynthesis</keyword>
<reference key="1">
    <citation type="journal article" date="1992" name="J. Bacteriol.">
        <title>Cloning and sequencing of Escherichia coli ubiC and purification of chorismate lyase.</title>
        <authorList>
            <person name="Nichols B.P."/>
            <person name="Green J.M."/>
        </authorList>
    </citation>
    <scope>NUCLEOTIDE SEQUENCE [GENOMIC DNA]</scope>
    <source>
        <strain>K12</strain>
    </source>
</reference>
<reference key="2">
    <citation type="journal article" date="1992" name="FEBS Lett.">
        <title>Ubiquinone biosynthesis. Cloning of the genes coding for chorismate pyruvate-lyase and 4-hydroxybenzoate octaprenyl transferase from Escherichia coli.</title>
        <authorList>
            <person name="Siebert M."/>
            <person name="Bechthold A."/>
            <person name="Melzer M."/>
            <person name="May U."/>
            <person name="Berger U."/>
            <person name="Schroeder G."/>
            <person name="Schroeder J."/>
            <person name="Severin K."/>
            <person name="Heide L."/>
        </authorList>
    </citation>
    <scope>NUCLEOTIDE SEQUENCE [GENOMIC DNA]</scope>
    <source>
        <strain>K12 / MC4100 / ATCC 35695 / DSM 6574</strain>
    </source>
</reference>
<reference key="3">
    <citation type="journal article" date="1992" name="J. Bacteriol.">
        <title>Location of the ubiA gene on the physical map of Escherichia coli.</title>
        <authorList>
            <person name="Nishimura K."/>
            <person name="Nakahigashi K."/>
            <person name="Inokuchi H."/>
        </authorList>
    </citation>
    <scope>NUCLEOTIDE SEQUENCE [GENOMIC DNA]</scope>
    <source>
        <strain>K12 / W3110 / ATCC 27325 / DSM 5911</strain>
    </source>
</reference>
<reference key="4">
    <citation type="submission" date="1992-11" db="EMBL/GenBank/DDBJ databases">
        <authorList>
            <person name="Wolter F.P."/>
        </authorList>
    </citation>
    <scope>NUCLEOTIDE SEQUENCE [GENOMIC DNA]</scope>
    <source>
        <strain>K12</strain>
    </source>
</reference>
<reference key="5">
    <citation type="journal article" date="1993" name="Nucleic Acids Res.">
        <title>Analysis of the Escherichia coli genome. IV. DNA sequence of the region from 89.2 to 92.8 minutes.</title>
        <authorList>
            <person name="Blattner F.R."/>
            <person name="Burland V.D."/>
            <person name="Plunkett G. III"/>
            <person name="Sofia H.J."/>
            <person name="Daniels D.L."/>
        </authorList>
    </citation>
    <scope>NUCLEOTIDE SEQUENCE [LARGE SCALE GENOMIC DNA]</scope>
    <source>
        <strain>K12 / MG1655 / ATCC 47076</strain>
    </source>
</reference>
<reference key="6">
    <citation type="submission" date="2005-06" db="EMBL/GenBank/DDBJ databases">
        <authorList>
            <person name="Zhang D."/>
            <person name="Shrestha B."/>
            <person name="Tan T."/>
        </authorList>
    </citation>
    <scope>NUCLEOTIDE SEQUENCE [GENOMIC DNA]</scope>
    <source>
        <strain>BL21</strain>
    </source>
</reference>
<reference key="7">
    <citation type="journal article" date="1997" name="Science">
        <title>The complete genome sequence of Escherichia coli K-12.</title>
        <authorList>
            <person name="Blattner F.R."/>
            <person name="Plunkett G. III"/>
            <person name="Bloch C.A."/>
            <person name="Perna N.T."/>
            <person name="Burland V."/>
            <person name="Riley M."/>
            <person name="Collado-Vides J."/>
            <person name="Glasner J.D."/>
            <person name="Rode C.K."/>
            <person name="Mayhew G.F."/>
            <person name="Gregor J."/>
            <person name="Davis N.W."/>
            <person name="Kirkpatrick H.A."/>
            <person name="Goeden M.A."/>
            <person name="Rose D.J."/>
            <person name="Mau B."/>
            <person name="Shao Y."/>
        </authorList>
    </citation>
    <scope>NUCLEOTIDE SEQUENCE [LARGE SCALE GENOMIC DNA]</scope>
    <source>
        <strain>K12 / MG1655 / ATCC 47076</strain>
    </source>
</reference>
<reference key="8">
    <citation type="journal article" date="2006" name="Mol. Syst. Biol.">
        <title>Highly accurate genome sequences of Escherichia coli K-12 strains MG1655 and W3110.</title>
        <authorList>
            <person name="Hayashi K."/>
            <person name="Morooka N."/>
            <person name="Yamamoto Y."/>
            <person name="Fujita K."/>
            <person name="Isono K."/>
            <person name="Choi S."/>
            <person name="Ohtsubo E."/>
            <person name="Baba T."/>
            <person name="Wanner B.L."/>
            <person name="Mori H."/>
            <person name="Horiuchi T."/>
        </authorList>
    </citation>
    <scope>NUCLEOTIDE SEQUENCE [LARGE SCALE GENOMIC DNA]</scope>
    <source>
        <strain>K12 / W3110 / ATCC 27325 / DSM 5911</strain>
    </source>
</reference>
<reference key="9">
    <citation type="journal article" date="1993" name="J. Gen. Microbiol.">
        <title>Mutants of Escherichia coli affected in respiration: the cloning and nucleotide sequence of ubiA, encoding the membrane-bound p-hydroxybenzoate:octaprenyltransferase.</title>
        <authorList>
            <person name="Wu G."/>
            <person name="Williams H.D."/>
            <person name="Gibson F."/>
            <person name="Poole R.K."/>
        </authorList>
    </citation>
    <scope>NUCLEOTIDE SEQUENCE [GENOMIC DNA] OF 1-80</scope>
    <source>
        <strain>K12</strain>
    </source>
</reference>
<reference key="10">
    <citation type="journal article" date="1972" name="J. Bacteriol.">
        <title>Biochemical and genetic studies on ubiquinone biosynthesis in Escherichia coli K-12:4-hydroxybenzoate octaprenyltransferase.</title>
        <authorList>
            <person name="Young I.G."/>
            <person name="Leppik R.A."/>
            <person name="Hamilton J.A."/>
            <person name="Gibson F."/>
        </authorList>
    </citation>
    <scope>FUNCTION</scope>
    <scope>CATALYTIC ACTIVITY</scope>
    <scope>COFACTOR</scope>
    <scope>PATHWAY</scope>
    <scope>SUBCELLULAR LOCATION</scope>
    <scope>DISRUPTION PHENOTYPE</scope>
    <source>
        <strain>K12</strain>
    </source>
</reference>
<reference key="11">
    <citation type="journal article" date="1994" name="Biochim. Biophys. Acta">
        <title>Characterization of polyprenyldiphosphate:4-hydroxybenzoate polyprenyltransferase from Escherichia coli.</title>
        <authorList>
            <person name="Melzer M."/>
            <person name="Heide L."/>
        </authorList>
    </citation>
    <scope>FUNCTION</scope>
    <scope>COFACTOR</scope>
    <scope>ACTIVITY REGULATION</scope>
    <scope>BIOPHYSICOCHEMICAL PROPERTIES</scope>
    <scope>SUBCELLULAR LOCATION</scope>
</reference>
<reference key="12">
    <citation type="journal article" date="1994" name="Biosci. Biotechnol. Biochem.">
        <title>Evidence that Escherichia coli ubiA product is a functional homolog of yeast COQ2, and the regulation of ubiA gene expression.</title>
        <authorList>
            <person name="Suzuki K."/>
            <person name="Ueda M."/>
            <person name="Yuasa M."/>
            <person name="Nakagawa T."/>
            <person name="Kawamukai M."/>
            <person name="Matsuda H."/>
        </authorList>
    </citation>
    <scope>INDUCTION</scope>
</reference>
<reference key="13">
    <citation type="journal article" date="1997" name="Genetics">
        <title>Isolation and characterization of suppressors of two Escherichia coli dnaG mutations, dnaG2903 and parB.</title>
        <authorList>
            <person name="Britton R.A."/>
            <person name="Lupski J.R."/>
        </authorList>
    </citation>
    <scope>POSSIBLE GENETIC INTERACTION WITH DNAG</scope>
</reference>
<reference key="14">
    <citation type="journal article" date="2005" name="Science">
        <title>Global topology analysis of the Escherichia coli inner membrane proteome.</title>
        <authorList>
            <person name="Daley D.O."/>
            <person name="Rapp M."/>
            <person name="Granseth E."/>
            <person name="Melen K."/>
            <person name="Drew D."/>
            <person name="von Heijne G."/>
        </authorList>
    </citation>
    <scope>TOPOLOGY [LARGE SCALE ANALYSIS]</scope>
    <scope>SUBCELLULAR LOCATION</scope>
    <source>
        <strain>K12 / MG1655 / ATCC 47076</strain>
    </source>
</reference>
<gene>
    <name evidence="1 7" type="primary">ubiA</name>
    <name type="synonym">cyr</name>
    <name type="ordered locus">b4040</name>
    <name type="ordered locus">JW4000</name>
</gene>
<comment type="function">
    <text evidence="3 5">Catalyzes the prenylation of para-hydroxybenzoate (PHB) with an all-trans polyprenyl group. Mediates the second step in the final reaction sequence of ubiquinone-8 (UQ-8) biosynthesis, which is the condensation of the polyisoprenoid side chain with PHB, generating the first membrane-bound Q intermediate 3-octaprenyl-4-hydroxybenzoate (PubMed:4552989). Geranyldiphosphate (GPP), all-trans-farnesyldiphosphate (FPP) and all-trans-solanesyldiphosphate (SPP) are also accepted as side chain precursors (PubMed:8155731).</text>
</comment>
<comment type="catalytic activity">
    <reaction evidence="1 3">
        <text>all-trans-octaprenyl diphosphate + 4-hydroxybenzoate = 4-hydroxy-3-(all-trans-octaprenyl)benzoate + diphosphate</text>
        <dbReference type="Rhea" id="RHEA:27782"/>
        <dbReference type="ChEBI" id="CHEBI:1617"/>
        <dbReference type="ChEBI" id="CHEBI:17879"/>
        <dbReference type="ChEBI" id="CHEBI:33019"/>
        <dbReference type="ChEBI" id="CHEBI:57711"/>
        <dbReference type="EC" id="2.5.1.39"/>
    </reaction>
</comment>
<comment type="cofactor">
    <cofactor evidence="1 3 5">
        <name>Mg(2+)</name>
        <dbReference type="ChEBI" id="CHEBI:18420"/>
    </cofactor>
    <text evidence="5">Can also use Mn(2+) and Co(2+) with lower efficiency.</text>
</comment>
<comment type="activity regulation">
    <text evidence="5">The reaction is stimulated by 0.01% CHAPS, but strongly inhibited by sodiumdeoxycholate, Tween 80 and Triton X-100.</text>
</comment>
<comment type="biophysicochemical properties">
    <kinetics>
        <KM evidence="5">255 uM for GPP</KM>
        <KM evidence="5">22 uM for FPP</KM>
        <KM evidence="5">31 uM for SPP</KM>
    </kinetics>
    <phDependence>
        <text evidence="5">Optimum pH is 7.8.</text>
    </phDependence>
</comment>
<comment type="pathway">
    <text evidence="1 3">Cofactor biosynthesis; ubiquinone biosynthesis.</text>
</comment>
<comment type="subcellular location">
    <subcellularLocation>
        <location evidence="1 2 3 5">Cell inner membrane</location>
        <topology evidence="1">Multi-pass membrane protein</topology>
    </subcellularLocation>
</comment>
<comment type="induction">
    <text evidence="4">Expression is slightly repressed by glucose.</text>
</comment>
<comment type="disruption phenotype">
    <text evidence="3">Mutant is unable to convert 4-hydroxybenzoate into 3-octaprenyl-4-hydroxybenzoate and is ubiquinone-deficient.</text>
</comment>
<comment type="miscellaneous">
    <text evidence="11">The sdgG mutation, which suppresses a conditional mutation in dnaG (DNA primase), has been localized to one of the ubiA, ubiC or yjbI genes.</text>
</comment>
<comment type="similarity">
    <text evidence="1 9">Belongs to the UbiA prenyltransferase family.</text>
</comment>
<accession>P0AGK1</accession>
<accession>P26601</accession>
<accession>Q2M6R4</accession>
<accession>Q4JHR7</accession>
<protein>
    <recommendedName>
        <fullName evidence="1 7">4-hydroxybenzoate octaprenyltransferase</fullName>
        <ecNumber evidence="1 3">2.5.1.39</ecNumber>
    </recommendedName>
    <alternativeName>
        <fullName evidence="1 8">4-HB polyprenyltransferase</fullName>
    </alternativeName>
    <alternativeName>
        <fullName evidence="6">PHB octaprenyl transferase</fullName>
    </alternativeName>
</protein>
<organism>
    <name type="scientific">Escherichia coli (strain K12)</name>
    <dbReference type="NCBI Taxonomy" id="83333"/>
    <lineage>
        <taxon>Bacteria</taxon>
        <taxon>Pseudomonadati</taxon>
        <taxon>Pseudomonadota</taxon>
        <taxon>Gammaproteobacteria</taxon>
        <taxon>Enterobacterales</taxon>
        <taxon>Enterobacteriaceae</taxon>
        <taxon>Escherichia</taxon>
    </lineage>
</organism>
<name>UBIA_ECOLI</name>
<dbReference type="EC" id="2.5.1.39" evidence="1 3"/>
<dbReference type="EMBL" id="M93136">
    <property type="protein sequence ID" value="AAA24712.1"/>
    <property type="molecule type" value="Genomic_DNA"/>
</dbReference>
<dbReference type="EMBL" id="M93413">
    <property type="protein sequence ID" value="AAA24717.1"/>
    <property type="molecule type" value="Genomic_DNA"/>
</dbReference>
<dbReference type="EMBL" id="X66619">
    <property type="protein sequence ID" value="CAA47182.1"/>
    <property type="molecule type" value="Genomic_DNA"/>
</dbReference>
<dbReference type="EMBL" id="X57434">
    <property type="protein sequence ID" value="CAA40682.1"/>
    <property type="molecule type" value="Genomic_DNA"/>
</dbReference>
<dbReference type="EMBL" id="X69522">
    <property type="protein sequence ID" value="CAA49270.1"/>
    <property type="molecule type" value="Genomic_DNA"/>
</dbReference>
<dbReference type="EMBL" id="DQ087228">
    <property type="protein sequence ID" value="AAY88960.1"/>
    <property type="molecule type" value="Genomic_DNA"/>
</dbReference>
<dbReference type="EMBL" id="U00006">
    <property type="protein sequence ID" value="AAC43134.1"/>
    <property type="molecule type" value="Genomic_DNA"/>
</dbReference>
<dbReference type="EMBL" id="U00096">
    <property type="protein sequence ID" value="AAC77010.1"/>
    <property type="molecule type" value="Genomic_DNA"/>
</dbReference>
<dbReference type="EMBL" id="AP009048">
    <property type="protein sequence ID" value="BAE78042.1"/>
    <property type="molecule type" value="Genomic_DNA"/>
</dbReference>
<dbReference type="EMBL" id="M96268">
    <property type="protein sequence ID" value="AAA17028.1"/>
    <property type="molecule type" value="Unassigned_DNA"/>
</dbReference>
<dbReference type="EMBL" id="X63407">
    <property type="protein sequence ID" value="CAA45003.1"/>
    <property type="molecule type" value="Genomic_DNA"/>
</dbReference>
<dbReference type="PIR" id="JC2316">
    <property type="entry name" value="JC2316"/>
</dbReference>
<dbReference type="RefSeq" id="NP_418464.1">
    <property type="nucleotide sequence ID" value="NC_000913.3"/>
</dbReference>
<dbReference type="RefSeq" id="WP_000455227.1">
    <property type="nucleotide sequence ID" value="NZ_SSZK01000016.1"/>
</dbReference>
<dbReference type="SMR" id="P0AGK1"/>
<dbReference type="BioGRID" id="4259714">
    <property type="interactions" value="333"/>
</dbReference>
<dbReference type="FunCoup" id="P0AGK1">
    <property type="interactions" value="684"/>
</dbReference>
<dbReference type="STRING" id="511145.b4040"/>
<dbReference type="jPOST" id="P0AGK1"/>
<dbReference type="PaxDb" id="511145-b4040"/>
<dbReference type="EnsemblBacteria" id="AAC77010">
    <property type="protein sequence ID" value="AAC77010"/>
    <property type="gene ID" value="b4040"/>
</dbReference>
<dbReference type="GeneID" id="93777791"/>
<dbReference type="GeneID" id="948540"/>
<dbReference type="KEGG" id="ecj:JW4000"/>
<dbReference type="KEGG" id="eco:b4040"/>
<dbReference type="KEGG" id="ecoc:C3026_21835"/>
<dbReference type="PATRIC" id="fig|1411691.4.peg.2668"/>
<dbReference type="EchoBASE" id="EB1344"/>
<dbReference type="eggNOG" id="COG0382">
    <property type="taxonomic scope" value="Bacteria"/>
</dbReference>
<dbReference type="HOGENOM" id="CLU_034879_1_0_6"/>
<dbReference type="InParanoid" id="P0AGK1"/>
<dbReference type="OMA" id="KFEHTIF"/>
<dbReference type="OrthoDB" id="9782418at2"/>
<dbReference type="PhylomeDB" id="P0AGK1"/>
<dbReference type="BioCyc" id="EcoCyc:4OHBENZOATE-OCTAPRENYLTRANSFER-MONOMER"/>
<dbReference type="BioCyc" id="MetaCyc:4OHBENZOATE-OCTAPRENYLTRANSFER-MONOMER"/>
<dbReference type="UniPathway" id="UPA00232"/>
<dbReference type="PRO" id="PR:P0AGK1"/>
<dbReference type="Proteomes" id="UP000000625">
    <property type="component" value="Chromosome"/>
</dbReference>
<dbReference type="GO" id="GO:0005886">
    <property type="term" value="C:plasma membrane"/>
    <property type="evidence" value="ECO:0000314"/>
    <property type="project" value="EcoCyc"/>
</dbReference>
<dbReference type="GO" id="GO:0008412">
    <property type="term" value="F:4-hydroxybenzoate polyprenyltransferase activity"/>
    <property type="evidence" value="ECO:0000314"/>
    <property type="project" value="EcoliWiki"/>
</dbReference>
<dbReference type="GO" id="GO:0016765">
    <property type="term" value="F:transferase activity, transferring alkyl or aryl (other than methyl) groups"/>
    <property type="evidence" value="ECO:0000314"/>
    <property type="project" value="EcoCyc"/>
</dbReference>
<dbReference type="GO" id="GO:0006744">
    <property type="term" value="P:ubiquinone biosynthetic process"/>
    <property type="evidence" value="ECO:0000315"/>
    <property type="project" value="EcoCyc"/>
</dbReference>
<dbReference type="CDD" id="cd13959">
    <property type="entry name" value="PT_UbiA_COQ2"/>
    <property type="match status" value="1"/>
</dbReference>
<dbReference type="FunFam" id="1.10.357.140:FF:000002">
    <property type="entry name" value="4-hydroxybenzoate octaprenyltransferase"/>
    <property type="match status" value="1"/>
</dbReference>
<dbReference type="FunFam" id="1.20.120.1780:FF:000001">
    <property type="entry name" value="4-hydroxybenzoate octaprenyltransferase"/>
    <property type="match status" value="1"/>
</dbReference>
<dbReference type="Gene3D" id="1.10.357.140">
    <property type="entry name" value="UbiA prenyltransferase"/>
    <property type="match status" value="1"/>
</dbReference>
<dbReference type="Gene3D" id="1.20.120.1780">
    <property type="entry name" value="UbiA prenyltransferase"/>
    <property type="match status" value="1"/>
</dbReference>
<dbReference type="HAMAP" id="MF_01635">
    <property type="entry name" value="UbiA"/>
    <property type="match status" value="1"/>
</dbReference>
<dbReference type="InterPro" id="IPR006370">
    <property type="entry name" value="HB_polyprenyltransferase-like"/>
</dbReference>
<dbReference type="InterPro" id="IPR039653">
    <property type="entry name" value="Prenyltransferase"/>
</dbReference>
<dbReference type="InterPro" id="IPR000537">
    <property type="entry name" value="UbiA_prenyltransferase"/>
</dbReference>
<dbReference type="InterPro" id="IPR030470">
    <property type="entry name" value="UbiA_prenylTrfase_CS"/>
</dbReference>
<dbReference type="InterPro" id="IPR044878">
    <property type="entry name" value="UbiA_sf"/>
</dbReference>
<dbReference type="NCBIfam" id="TIGR01474">
    <property type="entry name" value="ubiA_proteo"/>
    <property type="match status" value="1"/>
</dbReference>
<dbReference type="PANTHER" id="PTHR11048:SF28">
    <property type="entry name" value="4-HYDROXYBENZOATE POLYPRENYLTRANSFERASE, MITOCHONDRIAL"/>
    <property type="match status" value="1"/>
</dbReference>
<dbReference type="PANTHER" id="PTHR11048">
    <property type="entry name" value="PRENYLTRANSFERASES"/>
    <property type="match status" value="1"/>
</dbReference>
<dbReference type="Pfam" id="PF01040">
    <property type="entry name" value="UbiA"/>
    <property type="match status" value="1"/>
</dbReference>
<dbReference type="PROSITE" id="PS00943">
    <property type="entry name" value="UBIA"/>
    <property type="match status" value="1"/>
</dbReference>
<sequence length="290" mass="32512">MEWSLTQNKLLAFHRLMRTDKPIGALLLLWPTLWALWVATPGVPQLWILAVFVAGVWLMRAAGCVVNDYADRKFDGHVKRTANRPLPSGAVTEKEARALFVVLVLISFLLVLTLNTMTILLSIAALALAWVYPFMKRYTHLPQVVLGAAFGWSIPMAFAAVSESVPLSCWLMFLANILWAVAYDTQYAMVDRDDDVKIGIKSTAILFGQYDKLIIGILQIGVLALMAIIGELNGLGWGYYWSILVAGALFVYQQKLIANREREACFKAFMNNNYVGLVLFLGLAMSYWHF</sequence>
<feature type="chain" id="PRO_0000162890" description="4-hydroxybenzoate octaprenyltransferase">
    <location>
        <begin position="1"/>
        <end position="290"/>
    </location>
</feature>
<feature type="topological domain" description="Periplasmic" evidence="10">
    <location>
        <begin position="1"/>
        <end position="22"/>
    </location>
</feature>
<feature type="transmembrane region" description="Helical" evidence="1">
    <location>
        <begin position="23"/>
        <end position="43"/>
    </location>
</feature>
<feature type="topological domain" description="Cytoplasmic" evidence="10">
    <location>
        <begin position="44"/>
        <end position="45"/>
    </location>
</feature>
<feature type="transmembrane region" description="Helical" evidence="1">
    <location>
        <begin position="46"/>
        <end position="66"/>
    </location>
</feature>
<feature type="topological domain" description="Periplasmic" evidence="10">
    <location>
        <begin position="67"/>
        <end position="99"/>
    </location>
</feature>
<feature type="transmembrane region" description="Helical" evidence="1">
    <location>
        <begin position="100"/>
        <end position="119"/>
    </location>
</feature>
<feature type="topological domain" description="Cytoplasmic" evidence="10">
    <location>
        <begin position="120"/>
        <end position="140"/>
    </location>
</feature>
<feature type="transmembrane region" description="Helical" evidence="1">
    <location>
        <begin position="141"/>
        <end position="161"/>
    </location>
</feature>
<feature type="topological domain" description="Periplasmic" evidence="10">
    <location>
        <position position="162"/>
    </location>
</feature>
<feature type="transmembrane region" description="Helical" evidence="1">
    <location>
        <begin position="163"/>
        <end position="183"/>
    </location>
</feature>
<feature type="topological domain" description="Cytoplasmic" evidence="10">
    <location>
        <begin position="184"/>
        <end position="212"/>
    </location>
</feature>
<feature type="transmembrane region" description="Helical" evidence="1">
    <location>
        <begin position="213"/>
        <end position="233"/>
    </location>
</feature>
<feature type="transmembrane region" description="Helical" evidence="1">
    <location>
        <begin position="234"/>
        <end position="254"/>
    </location>
</feature>
<feature type="topological domain" description="Cytoplasmic" evidence="10">
    <location>
        <begin position="255"/>
        <end position="267"/>
    </location>
</feature>
<feature type="transmembrane region" description="Helical" evidence="1">
    <location>
        <begin position="268"/>
        <end position="288"/>
    </location>
</feature>
<feature type="topological domain" description="Periplasmic" evidence="2">
    <location>
        <begin position="289"/>
        <end position="290"/>
    </location>
</feature>
<evidence type="ECO:0000255" key="1">
    <source>
        <dbReference type="HAMAP-Rule" id="MF_01635"/>
    </source>
</evidence>
<evidence type="ECO:0000269" key="2">
    <source>
    </source>
</evidence>
<evidence type="ECO:0000269" key="3">
    <source>
    </source>
</evidence>
<evidence type="ECO:0000269" key="4">
    <source>
    </source>
</evidence>
<evidence type="ECO:0000269" key="5">
    <source>
    </source>
</evidence>
<evidence type="ECO:0000303" key="6">
    <source>
    </source>
</evidence>
<evidence type="ECO:0000303" key="7">
    <source>
    </source>
</evidence>
<evidence type="ECO:0000303" key="8">
    <source>
    </source>
</evidence>
<evidence type="ECO:0000305" key="9"/>
<evidence type="ECO:0000305" key="10">
    <source>
    </source>
</evidence>
<evidence type="ECO:0000305" key="11">
    <source>
    </source>
</evidence>